<feature type="chain" id="PRO_1000063294" description="ATP phosphoribosyltransferase">
    <location>
        <begin position="1"/>
        <end position="215"/>
    </location>
</feature>
<organism>
    <name type="scientific">Prochlorococcus marinus (strain MIT 9215)</name>
    <dbReference type="NCBI Taxonomy" id="93060"/>
    <lineage>
        <taxon>Bacteria</taxon>
        <taxon>Bacillati</taxon>
        <taxon>Cyanobacteriota</taxon>
        <taxon>Cyanophyceae</taxon>
        <taxon>Synechococcales</taxon>
        <taxon>Prochlorococcaceae</taxon>
        <taxon>Prochlorococcus</taxon>
    </lineage>
</organism>
<evidence type="ECO:0000255" key="1">
    <source>
        <dbReference type="HAMAP-Rule" id="MF_01018"/>
    </source>
</evidence>
<keyword id="KW-0028">Amino-acid biosynthesis</keyword>
<keyword id="KW-0067">ATP-binding</keyword>
<keyword id="KW-0963">Cytoplasm</keyword>
<keyword id="KW-0328">Glycosyltransferase</keyword>
<keyword id="KW-0368">Histidine biosynthesis</keyword>
<keyword id="KW-0547">Nucleotide-binding</keyword>
<keyword id="KW-0808">Transferase</keyword>
<sequence>MFTIALPKGALLRDSISTFKRAGLDFSNALDENNRSLTFESNCKRAKALLVRNGDVPVYVSYGQADLGIVGYDVLRESELKVAKLLDLGFGGCHMSLAVKKNSNYSKPTDLPANCKVASKFIKTARSYFEELNIPVEIVHLTGSVELGPITGMAEAIVDLVATGKTLKENGLIKIDDLFYSTARLIGNPLSMRLDDNHLRDTILSIESTNSLIEE</sequence>
<accession>A8G3S5</accession>
<protein>
    <recommendedName>
        <fullName evidence="1">ATP phosphoribosyltransferase</fullName>
        <shortName evidence="1">ATP-PRT</shortName>
        <shortName evidence="1">ATP-PRTase</shortName>
        <ecNumber evidence="1">2.4.2.17</ecNumber>
    </recommendedName>
</protein>
<gene>
    <name evidence="1" type="primary">hisG</name>
    <name type="ordered locus">P9215_06411</name>
</gene>
<name>HIS1_PROM2</name>
<comment type="function">
    <text evidence="1">Catalyzes the condensation of ATP and 5-phosphoribose 1-diphosphate to form N'-(5'-phosphoribosyl)-ATP (PR-ATP). Has a crucial role in the pathway because the rate of histidine biosynthesis seems to be controlled primarily by regulation of HisG enzymatic activity.</text>
</comment>
<comment type="catalytic activity">
    <reaction evidence="1">
        <text>1-(5-phospho-beta-D-ribosyl)-ATP + diphosphate = 5-phospho-alpha-D-ribose 1-diphosphate + ATP</text>
        <dbReference type="Rhea" id="RHEA:18473"/>
        <dbReference type="ChEBI" id="CHEBI:30616"/>
        <dbReference type="ChEBI" id="CHEBI:33019"/>
        <dbReference type="ChEBI" id="CHEBI:58017"/>
        <dbReference type="ChEBI" id="CHEBI:73183"/>
        <dbReference type="EC" id="2.4.2.17"/>
    </reaction>
</comment>
<comment type="pathway">
    <text evidence="1">Amino-acid biosynthesis; L-histidine biosynthesis; L-histidine from 5-phospho-alpha-D-ribose 1-diphosphate: step 1/9.</text>
</comment>
<comment type="subunit">
    <text evidence="1">Heteromultimer composed of HisG and HisZ subunits.</text>
</comment>
<comment type="subcellular location">
    <subcellularLocation>
        <location evidence="1">Cytoplasm</location>
    </subcellularLocation>
</comment>
<comment type="domain">
    <text>Lacks the C-terminal regulatory region which is replaced by HisZ.</text>
</comment>
<comment type="similarity">
    <text evidence="1">Belongs to the ATP phosphoribosyltransferase family. Short subfamily.</text>
</comment>
<proteinExistence type="inferred from homology"/>
<reference key="1">
    <citation type="journal article" date="2007" name="PLoS Genet.">
        <title>Patterns and implications of gene gain and loss in the evolution of Prochlorococcus.</title>
        <authorList>
            <person name="Kettler G.C."/>
            <person name="Martiny A.C."/>
            <person name="Huang K."/>
            <person name="Zucker J."/>
            <person name="Coleman M.L."/>
            <person name="Rodrigue S."/>
            <person name="Chen F."/>
            <person name="Lapidus A."/>
            <person name="Ferriera S."/>
            <person name="Johnson J."/>
            <person name="Steglich C."/>
            <person name="Church G.M."/>
            <person name="Richardson P."/>
            <person name="Chisholm S.W."/>
        </authorList>
    </citation>
    <scope>NUCLEOTIDE SEQUENCE [LARGE SCALE GENOMIC DNA]</scope>
    <source>
        <strain>MIT 9215</strain>
    </source>
</reference>
<dbReference type="EC" id="2.4.2.17" evidence="1"/>
<dbReference type="EMBL" id="CP000825">
    <property type="protein sequence ID" value="ABV50256.1"/>
    <property type="molecule type" value="Genomic_DNA"/>
</dbReference>
<dbReference type="RefSeq" id="WP_012007378.1">
    <property type="nucleotide sequence ID" value="NC_009840.1"/>
</dbReference>
<dbReference type="SMR" id="A8G3S5"/>
<dbReference type="STRING" id="93060.P9215_06411"/>
<dbReference type="KEGG" id="pmh:P9215_06411"/>
<dbReference type="eggNOG" id="COG0040">
    <property type="taxonomic scope" value="Bacteria"/>
</dbReference>
<dbReference type="HOGENOM" id="CLU_038115_2_0_3"/>
<dbReference type="OrthoDB" id="9801867at2"/>
<dbReference type="UniPathway" id="UPA00031">
    <property type="reaction ID" value="UER00006"/>
</dbReference>
<dbReference type="Proteomes" id="UP000002014">
    <property type="component" value="Chromosome"/>
</dbReference>
<dbReference type="GO" id="GO:0005737">
    <property type="term" value="C:cytoplasm"/>
    <property type="evidence" value="ECO:0007669"/>
    <property type="project" value="UniProtKB-SubCell"/>
</dbReference>
<dbReference type="GO" id="GO:0005524">
    <property type="term" value="F:ATP binding"/>
    <property type="evidence" value="ECO:0007669"/>
    <property type="project" value="UniProtKB-KW"/>
</dbReference>
<dbReference type="GO" id="GO:0003879">
    <property type="term" value="F:ATP phosphoribosyltransferase activity"/>
    <property type="evidence" value="ECO:0007669"/>
    <property type="project" value="UniProtKB-UniRule"/>
</dbReference>
<dbReference type="GO" id="GO:0000105">
    <property type="term" value="P:L-histidine biosynthetic process"/>
    <property type="evidence" value="ECO:0007669"/>
    <property type="project" value="UniProtKB-UniRule"/>
</dbReference>
<dbReference type="CDD" id="cd13595">
    <property type="entry name" value="PBP2_HisGs"/>
    <property type="match status" value="1"/>
</dbReference>
<dbReference type="FunFam" id="3.40.190.10:FF:000008">
    <property type="entry name" value="ATP phosphoribosyltransferase"/>
    <property type="match status" value="1"/>
</dbReference>
<dbReference type="Gene3D" id="3.40.190.10">
    <property type="entry name" value="Periplasmic binding protein-like II"/>
    <property type="match status" value="2"/>
</dbReference>
<dbReference type="HAMAP" id="MF_01018">
    <property type="entry name" value="HisG_Short"/>
    <property type="match status" value="1"/>
</dbReference>
<dbReference type="InterPro" id="IPR013820">
    <property type="entry name" value="ATP_PRibTrfase_cat"/>
</dbReference>
<dbReference type="InterPro" id="IPR018198">
    <property type="entry name" value="ATP_PRibTrfase_CS"/>
</dbReference>
<dbReference type="InterPro" id="IPR001348">
    <property type="entry name" value="ATP_PRibTrfase_HisG"/>
</dbReference>
<dbReference type="InterPro" id="IPR024893">
    <property type="entry name" value="ATP_PRibTrfase_HisG_short"/>
</dbReference>
<dbReference type="NCBIfam" id="TIGR00070">
    <property type="entry name" value="hisG"/>
    <property type="match status" value="1"/>
</dbReference>
<dbReference type="PANTHER" id="PTHR21403:SF8">
    <property type="entry name" value="ATP PHOSPHORIBOSYLTRANSFERASE"/>
    <property type="match status" value="1"/>
</dbReference>
<dbReference type="PANTHER" id="PTHR21403">
    <property type="entry name" value="ATP PHOSPHORIBOSYLTRANSFERASE ATP-PRTASE"/>
    <property type="match status" value="1"/>
</dbReference>
<dbReference type="Pfam" id="PF01634">
    <property type="entry name" value="HisG"/>
    <property type="match status" value="1"/>
</dbReference>
<dbReference type="SUPFAM" id="SSF53850">
    <property type="entry name" value="Periplasmic binding protein-like II"/>
    <property type="match status" value="1"/>
</dbReference>
<dbReference type="PROSITE" id="PS01316">
    <property type="entry name" value="ATP_P_PHORIBOSYLTR"/>
    <property type="match status" value="1"/>
</dbReference>